<comment type="function">
    <text evidence="3 5 6">Involved in the catabolism of oxalate and in the adapatation to low pH via the induction of the oxalate-dependent acid tolerance response (ATR). Catalyzes the transfer of the CoA moiety from formyl-CoA to oxalate. It can also use succinate as an acceptor.</text>
</comment>
<comment type="catalytic activity">
    <reaction evidence="1 5">
        <text>formyl-CoA + oxalate = oxalyl-CoA + formate</text>
        <dbReference type="Rhea" id="RHEA:16545"/>
        <dbReference type="ChEBI" id="CHEBI:15740"/>
        <dbReference type="ChEBI" id="CHEBI:30623"/>
        <dbReference type="ChEBI" id="CHEBI:57376"/>
        <dbReference type="ChEBI" id="CHEBI:57388"/>
        <dbReference type="EC" id="2.8.3.16"/>
    </reaction>
</comment>
<comment type="catalytic activity">
    <reaction evidence="5">
        <text>formyl-CoA + succinate = succinyl-CoA + formate</text>
        <dbReference type="Rhea" id="RHEA:71735"/>
        <dbReference type="ChEBI" id="CHEBI:15740"/>
        <dbReference type="ChEBI" id="CHEBI:30031"/>
        <dbReference type="ChEBI" id="CHEBI:57292"/>
        <dbReference type="ChEBI" id="CHEBI:57376"/>
    </reaction>
</comment>
<comment type="biophysicochemical properties">
    <kinetics>
        <KM evidence="5">180 uM for formyl-CoA (with succinate as acceptor at pH 6.7 and 30 degrees Celsius)</KM>
        <KM evidence="5">352 uM for formyl-CoA (with oxalate as acceptor at pH 6.7 and 30 degrees Celsius)</KM>
        <KM evidence="5">510 uM for oxalate (with formyl-CoA as donor at pH 6.7 and 30 degrees Celsius)</KM>
        <KM evidence="5">80 mM for succinate (with formyl-CoA as donor at pH 6.7 and 30 degrees Celsius)</KM>
        <text>kcat is 130 sec(-1) for CoA-transferase activity with formyl-CoA as substrate (with oxalate as acceptor at pH 6.7 and 30 degrees Celsius). kcat is 5.3 sec(-1) for CoA-transferase activity with formyl-CoA as substrate (with succinate as acceptor at pH 6.7 and 30 degrees Celsius).</text>
    </kinetics>
</comment>
<comment type="pathway">
    <text evidence="1">Metabolic intermediate degradation; oxalate degradation; CO(2) and formate from oxalate: step 1/2.</text>
</comment>
<comment type="subunit">
    <text evidence="1 3 4">Homodimer.</text>
</comment>
<comment type="induction">
    <text evidence="2 6">By the acid response regulator EvgA.</text>
</comment>
<comment type="disruption phenotype">
    <text evidence="6">Cells lacking this gene show a reduced acid tolerance response (ATR) during the adaptation phase. However the deletion of YfdW has no effect on survival in oxalate-containing challenge medium.</text>
</comment>
<comment type="similarity">
    <text evidence="1 7">Belongs to the CoA-transferase III family. Frc subfamily.</text>
</comment>
<feature type="chain" id="PRO_0000194716" description="Formyl-CoA:oxalate CoA-transferase">
    <location>
        <begin position="1"/>
        <end position="416"/>
    </location>
</feature>
<feature type="active site" description="Nucleophile" evidence="8">
    <location>
        <position position="169"/>
    </location>
</feature>
<feature type="binding site">
    <location>
        <begin position="17"/>
        <end position="18"/>
    </location>
    <ligand>
        <name>CoA</name>
        <dbReference type="ChEBI" id="CHEBI:57287"/>
    </ligand>
</feature>
<feature type="binding site" evidence="1 4">
    <location>
        <position position="38"/>
    </location>
    <ligand>
        <name>CoA</name>
        <dbReference type="ChEBI" id="CHEBI:57287"/>
    </ligand>
</feature>
<feature type="binding site">
    <location>
        <begin position="72"/>
        <end position="75"/>
    </location>
    <ligand>
        <name>CoA</name>
        <dbReference type="ChEBI" id="CHEBI:57287"/>
    </ligand>
</feature>
<feature type="binding site">
    <location>
        <begin position="96"/>
        <end position="98"/>
    </location>
    <ligand>
        <name>CoA</name>
        <dbReference type="ChEBI" id="CHEBI:57287"/>
    </ligand>
</feature>
<feature type="binding site" evidence="1">
    <location>
        <position position="104"/>
    </location>
    <ligand>
        <name>CoA</name>
        <dbReference type="ChEBI" id="CHEBI:57287"/>
    </ligand>
</feature>
<feature type="binding site">
    <location>
        <begin position="137"/>
        <end position="140"/>
    </location>
    <ligand>
        <name>CoA</name>
        <dbReference type="ChEBI" id="CHEBI:57287"/>
    </ligand>
</feature>
<feature type="binding site" evidence="7">
    <location>
        <begin position="248"/>
        <end position="250"/>
    </location>
    <ligand>
        <name>substrate</name>
    </ligand>
</feature>
<feature type="binding site">
    <location>
        <begin position="273"/>
        <end position="275"/>
    </location>
    <ligand>
        <name>CoA</name>
        <dbReference type="ChEBI" id="CHEBI:57287"/>
    </ligand>
</feature>
<feature type="turn" evidence="16">
    <location>
        <begin position="4"/>
        <end position="7"/>
    </location>
</feature>
<feature type="strand" evidence="16">
    <location>
        <begin position="9"/>
        <end position="12"/>
    </location>
</feature>
<feature type="helix" evidence="16">
    <location>
        <begin position="18"/>
        <end position="28"/>
    </location>
</feature>
<feature type="strand" evidence="16">
    <location>
        <begin position="32"/>
        <end position="37"/>
    </location>
</feature>
<feature type="turn" evidence="16">
    <location>
        <begin position="39"/>
        <end position="41"/>
    </location>
</feature>
<feature type="helix" evidence="16">
    <location>
        <begin position="44"/>
        <end position="46"/>
    </location>
</feature>
<feature type="turn" evidence="16">
    <location>
        <begin position="47"/>
        <end position="49"/>
    </location>
</feature>
<feature type="helix" evidence="16">
    <location>
        <begin position="58"/>
        <end position="61"/>
    </location>
</feature>
<feature type="strand" evidence="16">
    <location>
        <begin position="68"/>
        <end position="71"/>
    </location>
</feature>
<feature type="helix" evidence="16">
    <location>
        <begin position="77"/>
        <end position="89"/>
    </location>
</feature>
<feature type="strand" evidence="16">
    <location>
        <begin position="91"/>
        <end position="95"/>
    </location>
</feature>
<feature type="helix" evidence="15">
    <location>
        <begin position="101"/>
        <end position="104"/>
    </location>
</feature>
<feature type="helix" evidence="16">
    <location>
        <begin position="109"/>
        <end position="115"/>
    </location>
</feature>
<feature type="strand" evidence="16">
    <location>
        <begin position="120"/>
        <end position="127"/>
    </location>
</feature>
<feature type="turn" evidence="16">
    <location>
        <begin position="132"/>
        <end position="135"/>
    </location>
</feature>
<feature type="helix" evidence="16">
    <location>
        <begin position="140"/>
        <end position="146"/>
    </location>
</feature>
<feature type="helix" evidence="16">
    <location>
        <begin position="149"/>
        <end position="152"/>
    </location>
</feature>
<feature type="turn" evidence="16">
    <location>
        <begin position="167"/>
        <end position="169"/>
    </location>
</feature>
<feature type="helix" evidence="16">
    <location>
        <begin position="170"/>
        <end position="190"/>
    </location>
</feature>
<feature type="strand" evidence="16">
    <location>
        <begin position="195"/>
        <end position="199"/>
    </location>
</feature>
<feature type="helix" evidence="16">
    <location>
        <begin position="200"/>
        <end position="207"/>
    </location>
</feature>
<feature type="helix" evidence="16">
    <location>
        <begin position="209"/>
        <end position="221"/>
    </location>
</feature>
<feature type="turn" evidence="16">
    <location>
        <begin position="228"/>
        <end position="232"/>
    </location>
</feature>
<feature type="strand" evidence="16">
    <location>
        <begin position="247"/>
        <end position="250"/>
    </location>
</feature>
<feature type="strand" evidence="16">
    <location>
        <begin position="252"/>
        <end position="256"/>
    </location>
</feature>
<feature type="turn" evidence="16">
    <location>
        <begin position="258"/>
        <end position="262"/>
    </location>
</feature>
<feature type="strand" evidence="16">
    <location>
        <begin position="267"/>
        <end position="271"/>
    </location>
</feature>
<feature type="helix" evidence="16">
    <location>
        <begin position="274"/>
        <end position="276"/>
    </location>
</feature>
<feature type="helix" evidence="16">
    <location>
        <begin position="277"/>
        <end position="283"/>
    </location>
</feature>
<feature type="helix" evidence="16">
    <location>
        <begin position="287"/>
        <end position="290"/>
    </location>
</feature>
<feature type="turn" evidence="16">
    <location>
        <begin position="293"/>
        <end position="295"/>
    </location>
</feature>
<feature type="helix" evidence="16">
    <location>
        <begin position="298"/>
        <end position="301"/>
    </location>
</feature>
<feature type="helix" evidence="16">
    <location>
        <begin position="302"/>
        <end position="304"/>
    </location>
</feature>
<feature type="helix" evidence="16">
    <location>
        <begin position="305"/>
        <end position="316"/>
    </location>
</feature>
<feature type="helix" evidence="16">
    <location>
        <begin position="321"/>
        <end position="328"/>
    </location>
</feature>
<feature type="helix" evidence="16">
    <location>
        <begin position="329"/>
        <end position="331"/>
    </location>
</feature>
<feature type="strand" evidence="16">
    <location>
        <begin position="335"/>
        <end position="337"/>
    </location>
</feature>
<feature type="helix" evidence="16">
    <location>
        <begin position="341"/>
        <end position="346"/>
    </location>
</feature>
<feature type="helix" evidence="16">
    <location>
        <begin position="348"/>
        <end position="352"/>
    </location>
</feature>
<feature type="strand" evidence="16">
    <location>
        <begin position="355"/>
        <end position="361"/>
    </location>
</feature>
<feature type="turn" evidence="16">
    <location>
        <begin position="362"/>
        <end position="364"/>
    </location>
</feature>
<feature type="strand" evidence="16">
    <location>
        <begin position="365"/>
        <end position="370"/>
    </location>
</feature>
<feature type="strand" evidence="15">
    <location>
        <begin position="373"/>
        <end position="376"/>
    </location>
</feature>
<feature type="turn" evidence="16">
    <location>
        <begin position="389"/>
        <end position="392"/>
    </location>
</feature>
<feature type="helix" evidence="16">
    <location>
        <begin position="393"/>
        <end position="399"/>
    </location>
</feature>
<feature type="helix" evidence="16">
    <location>
        <begin position="404"/>
        <end position="416"/>
    </location>
</feature>
<evidence type="ECO:0000255" key="1">
    <source>
        <dbReference type="HAMAP-Rule" id="MF_00742"/>
    </source>
</evidence>
<evidence type="ECO:0000269" key="2">
    <source>
    </source>
</evidence>
<evidence type="ECO:0000269" key="3">
    <source>
    </source>
</evidence>
<evidence type="ECO:0000269" key="4">
    <source>
    </source>
</evidence>
<evidence type="ECO:0000269" key="5">
    <source>
    </source>
</evidence>
<evidence type="ECO:0000269" key="6">
    <source>
    </source>
</evidence>
<evidence type="ECO:0000305" key="7"/>
<evidence type="ECO:0000305" key="8">
    <source>
    </source>
</evidence>
<evidence type="ECO:0007744" key="9">
    <source>
        <dbReference type="PDB" id="1PQY"/>
    </source>
</evidence>
<evidence type="ECO:0007744" key="10">
    <source>
        <dbReference type="PDB" id="1PT5"/>
    </source>
</evidence>
<evidence type="ECO:0007744" key="11">
    <source>
        <dbReference type="PDB" id="1PT7"/>
    </source>
</evidence>
<evidence type="ECO:0007744" key="12">
    <source>
        <dbReference type="PDB" id="1PT8"/>
    </source>
</evidence>
<evidence type="ECO:0007744" key="13">
    <source>
        <dbReference type="PDB" id="1Q6Y"/>
    </source>
</evidence>
<evidence type="ECO:0007744" key="14">
    <source>
        <dbReference type="PDB" id="1Q7E"/>
    </source>
</evidence>
<evidence type="ECO:0007829" key="15">
    <source>
        <dbReference type="PDB" id="1PT7"/>
    </source>
</evidence>
<evidence type="ECO:0007829" key="16">
    <source>
        <dbReference type="PDB" id="1Q7E"/>
    </source>
</evidence>
<sequence>MSTPLQGIKVLDFTGVQSGPSCTQMLAWFGADVIKIERPGVGDVTRHQLRDIPDIDALYFTMLNSNKRSIELNTKTAEGKEVMEKLIREADILVENFHPGAIDHMGFTWEHIQEINPRLIFGSIKGFDECSPYVNVKAYENVAQAAGGAASTTGFWDGPPLVSAAALGDSNTGMHLLIGLLAALLHREKTGRGQRVTMSMQDAVLNLCRVKLRDQQRLDKLGYLEEYPQYPNGTFGDAVPRGGNAGGGGQPGWILKCKGWETDPNAYIYFTIQEQNWENTCKAIGKPEWITDPAYSTAHARQPHIFDIFAEIEKYTVTIDKHEAVAYLTQFDIPCAPVLSMKEISLDPSLRQSGSVVEVEQPLRGKYLTVGCPMKFSAFTPDIKAAPLLGEHTAAVLQELGYSDDEIAAMKQNHAI</sequence>
<accession>P69902</accession>
<accession>P77407</accession>
<reference key="1">
    <citation type="journal article" date="1997" name="DNA Res.">
        <title>Construction of a contiguous 874-kb sequence of the Escherichia coli-K12 genome corresponding to 50.0-68.8 min on the linkage map and analysis of its sequence features.</title>
        <authorList>
            <person name="Yamamoto Y."/>
            <person name="Aiba H."/>
            <person name="Baba T."/>
            <person name="Hayashi K."/>
            <person name="Inada T."/>
            <person name="Isono K."/>
            <person name="Itoh T."/>
            <person name="Kimura S."/>
            <person name="Kitagawa M."/>
            <person name="Makino K."/>
            <person name="Miki T."/>
            <person name="Mitsuhashi N."/>
            <person name="Mizobuchi K."/>
            <person name="Mori H."/>
            <person name="Nakade S."/>
            <person name="Nakamura Y."/>
            <person name="Nashimoto H."/>
            <person name="Oshima T."/>
            <person name="Oyama S."/>
            <person name="Saito N."/>
            <person name="Sampei G."/>
            <person name="Satoh Y."/>
            <person name="Sivasundaram S."/>
            <person name="Tagami H."/>
            <person name="Takahashi H."/>
            <person name="Takeda J."/>
            <person name="Takemoto K."/>
            <person name="Uehara K."/>
            <person name="Wada C."/>
            <person name="Yamagata S."/>
            <person name="Horiuchi T."/>
        </authorList>
    </citation>
    <scope>NUCLEOTIDE SEQUENCE [LARGE SCALE GENOMIC DNA]</scope>
    <source>
        <strain>K12 / W3110 / ATCC 27325 / DSM 5911</strain>
    </source>
</reference>
<reference key="2">
    <citation type="journal article" date="1997" name="Science">
        <title>The complete genome sequence of Escherichia coli K-12.</title>
        <authorList>
            <person name="Blattner F.R."/>
            <person name="Plunkett G. III"/>
            <person name="Bloch C.A."/>
            <person name="Perna N.T."/>
            <person name="Burland V."/>
            <person name="Riley M."/>
            <person name="Collado-Vides J."/>
            <person name="Glasner J.D."/>
            <person name="Rode C.K."/>
            <person name="Mayhew G.F."/>
            <person name="Gregor J."/>
            <person name="Davis N.W."/>
            <person name="Kirkpatrick H.A."/>
            <person name="Goeden M.A."/>
            <person name="Rose D.J."/>
            <person name="Mau B."/>
            <person name="Shao Y."/>
        </authorList>
    </citation>
    <scope>NUCLEOTIDE SEQUENCE [LARGE SCALE GENOMIC DNA]</scope>
    <source>
        <strain>K12 / MG1655 / ATCC 47076</strain>
    </source>
</reference>
<reference key="3">
    <citation type="journal article" date="2006" name="Mol. Syst. Biol.">
        <title>Highly accurate genome sequences of Escherichia coli K-12 strains MG1655 and W3110.</title>
        <authorList>
            <person name="Hayashi K."/>
            <person name="Morooka N."/>
            <person name="Yamamoto Y."/>
            <person name="Fujita K."/>
            <person name="Isono K."/>
            <person name="Choi S."/>
            <person name="Ohtsubo E."/>
            <person name="Baba T."/>
            <person name="Wanner B.L."/>
            <person name="Mori H."/>
            <person name="Horiuchi T."/>
        </authorList>
    </citation>
    <scope>NUCLEOTIDE SEQUENCE [LARGE SCALE GENOMIC DNA]</scope>
    <source>
        <strain>K12 / W3110 / ATCC 27325 / DSM 5911</strain>
    </source>
</reference>
<reference key="4">
    <citation type="journal article" date="2003" name="Mol. Microbiol.">
        <title>Regulatory network of acid resistance genes in Escherichia coli.</title>
        <authorList>
            <person name="Masuda N."/>
            <person name="Church G.M."/>
        </authorList>
    </citation>
    <scope>INDUCTION</scope>
</reference>
<reference key="5">
    <citation type="journal article" date="2008" name="J. Bacteriol.">
        <title>Differential substrate specificity and kinetic behavior of Escherichia coli YfdW and Oxalobacter formigenes formyl coenzyme A transferase.</title>
        <authorList>
            <person name="Toyota C.G."/>
            <person name="Berthold C.L."/>
            <person name="Gruez A."/>
            <person name="Jonsson S."/>
            <person name="Lindqvist Y."/>
            <person name="Cambillau C."/>
            <person name="Richards N.G."/>
        </authorList>
    </citation>
    <scope>FUNCTION</scope>
    <scope>CATALYTIC ACTIVITY</scope>
    <scope>BIOPHYSICOCHEMICAL PROPERTIES</scope>
    <scope>SUBSTRATE SPECIFICITY</scope>
</reference>
<reference key="6">
    <citation type="journal article" date="2013" name="J. Bacteriol.">
        <title>YfdW and YfdU are required for oxalate-induced acid tolerance in Escherichia coli K-12.</title>
        <authorList>
            <person name="Fontenot E.M."/>
            <person name="Ezelle K.E."/>
            <person name="Gabreski L.N."/>
            <person name="Giglio E.R."/>
            <person name="McAfee J.M."/>
            <person name="Mills A.C."/>
            <person name="Qureshi M.N."/>
            <person name="Salmon K.M."/>
            <person name="Toyota C.G."/>
        </authorList>
    </citation>
    <scope>FUNCTION</scope>
    <scope>DISRUPTION PHENOTYPE</scope>
    <scope>INDUCTION</scope>
</reference>
<reference evidence="10 11 12" key="7">
    <citation type="journal article" date="2003" name="J. Biol. Chem.">
        <title>The crystal structure of the Escherichia coli YfdW gene product reveals a new fold of two interlaced rings identifying a wide family of CoA transferases.</title>
        <authorList>
            <person name="Gruez A."/>
            <person name="Roig-Zamboni V."/>
            <person name="Valencia C."/>
            <person name="Campanacci V."/>
            <person name="Cambillau C."/>
        </authorList>
    </citation>
    <scope>X-RAY CRYSTALLOGRAPHY (1.8 ANGSTROMS) IN COMPLEX WITH SUBSTRATE ANALOGS</scope>
    <scope>FUNCTION</scope>
    <scope>ACTIVE SITE</scope>
    <scope>SUBUNIT</scope>
    <source>
        <strain>K12</strain>
    </source>
</reference>
<reference evidence="9 13 14" key="8">
    <citation type="journal article" date="2004" name="Acta Crystallogr. D">
        <title>Structure of Escherichia coli YfdW, a type III CoA transferase.</title>
        <authorList>
            <person name="Gogos A."/>
            <person name="Gorman J."/>
            <person name="Shapiro L."/>
        </authorList>
    </citation>
    <scope>X-RAY CRYSTALLOGRAPHY (1.60 ANGSTROMS) OF 2-416 IN COMPLEX WITH COENZYME A</scope>
    <scope>SUBUNIT</scope>
</reference>
<name>FCTA_ECOLI</name>
<gene>
    <name evidence="1" type="primary">frc</name>
    <name type="synonym">yfdW</name>
    <name type="ordered locus">b2374</name>
    <name type="ordered locus">JW2371</name>
</gene>
<dbReference type="EC" id="2.8.3.16" evidence="1 5"/>
<dbReference type="EMBL" id="U00096">
    <property type="protein sequence ID" value="AAC75433.1"/>
    <property type="molecule type" value="Genomic_DNA"/>
</dbReference>
<dbReference type="EMBL" id="AP009048">
    <property type="protein sequence ID" value="BAA16247.1"/>
    <property type="molecule type" value="Genomic_DNA"/>
</dbReference>
<dbReference type="PIR" id="C65011">
    <property type="entry name" value="C65011"/>
</dbReference>
<dbReference type="RefSeq" id="NP_416875.1">
    <property type="nucleotide sequence ID" value="NC_000913.3"/>
</dbReference>
<dbReference type="RefSeq" id="WP_000106759.1">
    <property type="nucleotide sequence ID" value="NZ_STEB01000008.1"/>
</dbReference>
<dbReference type="PDB" id="1PQY">
    <property type="method" value="X-ray"/>
    <property type="resolution" value="2.35 A"/>
    <property type="chains" value="A=2-416"/>
</dbReference>
<dbReference type="PDB" id="1PT5">
    <property type="method" value="X-ray"/>
    <property type="resolution" value="2.00 A"/>
    <property type="chains" value="A/B=1-416"/>
</dbReference>
<dbReference type="PDB" id="1PT7">
    <property type="method" value="X-ray"/>
    <property type="resolution" value="1.80 A"/>
    <property type="chains" value="A/B=1-416"/>
</dbReference>
<dbReference type="PDB" id="1PT8">
    <property type="method" value="X-ray"/>
    <property type="resolution" value="2.20 A"/>
    <property type="chains" value="A/B=1-416"/>
</dbReference>
<dbReference type="PDB" id="1Q6Y">
    <property type="method" value="X-ray"/>
    <property type="resolution" value="1.99 A"/>
    <property type="chains" value="A=2-416"/>
</dbReference>
<dbReference type="PDB" id="1Q7E">
    <property type="method" value="X-ray"/>
    <property type="resolution" value="1.60 A"/>
    <property type="chains" value="A=2-416"/>
</dbReference>
<dbReference type="PDBsum" id="1PQY"/>
<dbReference type="PDBsum" id="1PT5"/>
<dbReference type="PDBsum" id="1PT7"/>
<dbReference type="PDBsum" id="1PT8"/>
<dbReference type="PDBsum" id="1Q6Y"/>
<dbReference type="PDBsum" id="1Q7E"/>
<dbReference type="SMR" id="P69902"/>
<dbReference type="BioGRID" id="4260863">
    <property type="interactions" value="12"/>
</dbReference>
<dbReference type="BioGRID" id="851183">
    <property type="interactions" value="3"/>
</dbReference>
<dbReference type="FunCoup" id="P69902">
    <property type="interactions" value="3"/>
</dbReference>
<dbReference type="IntAct" id="P69902">
    <property type="interactions" value="4"/>
</dbReference>
<dbReference type="STRING" id="511145.b2374"/>
<dbReference type="PaxDb" id="511145-b2374"/>
<dbReference type="DNASU" id="946842"/>
<dbReference type="EnsemblBacteria" id="AAC75433">
    <property type="protein sequence ID" value="AAC75433"/>
    <property type="gene ID" value="b2374"/>
</dbReference>
<dbReference type="GeneID" id="75202557"/>
<dbReference type="GeneID" id="946842"/>
<dbReference type="KEGG" id="ecj:JW2371"/>
<dbReference type="KEGG" id="eco:b2374"/>
<dbReference type="KEGG" id="ecoc:C3026_13200"/>
<dbReference type="PATRIC" id="fig|1411691.4.peg.4355"/>
<dbReference type="EchoBASE" id="EB3897"/>
<dbReference type="eggNOG" id="COG1804">
    <property type="taxonomic scope" value="Bacteria"/>
</dbReference>
<dbReference type="HOGENOM" id="CLU_033975_2_1_6"/>
<dbReference type="InParanoid" id="P69902"/>
<dbReference type="OMA" id="KFDIPCA"/>
<dbReference type="OrthoDB" id="9058532at2"/>
<dbReference type="PhylomeDB" id="P69902"/>
<dbReference type="BioCyc" id="EcoCyc:G7237-MONOMER"/>
<dbReference type="BioCyc" id="MetaCyc:G7237-MONOMER"/>
<dbReference type="BRENDA" id="2.8.3.16">
    <property type="organism ID" value="2026"/>
</dbReference>
<dbReference type="UniPathway" id="UPA00540">
    <property type="reaction ID" value="UER00598"/>
</dbReference>
<dbReference type="EvolutionaryTrace" id="P69902"/>
<dbReference type="PRO" id="PR:P69902"/>
<dbReference type="Proteomes" id="UP000000625">
    <property type="component" value="Chromosome"/>
</dbReference>
<dbReference type="GO" id="GO:0033608">
    <property type="term" value="F:formyl-CoA transferase activity"/>
    <property type="evidence" value="ECO:0000314"/>
    <property type="project" value="EcoCyc"/>
</dbReference>
<dbReference type="GO" id="GO:0071468">
    <property type="term" value="P:cellular response to acidic pH"/>
    <property type="evidence" value="ECO:0000315"/>
    <property type="project" value="EcoCyc"/>
</dbReference>
<dbReference type="GO" id="GO:0033611">
    <property type="term" value="P:oxalate catabolic process"/>
    <property type="evidence" value="ECO:0007669"/>
    <property type="project" value="UniProtKB-UniRule"/>
</dbReference>
<dbReference type="Gene3D" id="3.40.50.10540">
    <property type="entry name" value="Crotonobetainyl-coa:carnitine coa-transferase, domain 1"/>
    <property type="match status" value="1"/>
</dbReference>
<dbReference type="Gene3D" id="3.30.1540.10">
    <property type="entry name" value="formyl-coa transferase, domain 3"/>
    <property type="match status" value="1"/>
</dbReference>
<dbReference type="HAMAP" id="MF_00742">
    <property type="entry name" value="Formyl_CoA_transfer"/>
    <property type="match status" value="1"/>
</dbReference>
<dbReference type="InterPro" id="IPR050483">
    <property type="entry name" value="CoA-transferase_III_domain"/>
</dbReference>
<dbReference type="InterPro" id="IPR003673">
    <property type="entry name" value="CoA-Trfase_fam_III"/>
</dbReference>
<dbReference type="InterPro" id="IPR044855">
    <property type="entry name" value="CoA-Trfase_III_dom3_sf"/>
</dbReference>
<dbReference type="InterPro" id="IPR023606">
    <property type="entry name" value="CoA-Trfase_III_dom_1_sf"/>
</dbReference>
<dbReference type="InterPro" id="IPR017659">
    <property type="entry name" value="Formyl_CoA_transfer"/>
</dbReference>
<dbReference type="NCBIfam" id="TIGR03253">
    <property type="entry name" value="oxalate_frc"/>
    <property type="match status" value="1"/>
</dbReference>
<dbReference type="NCBIfam" id="NF003809">
    <property type="entry name" value="PRK05398.1"/>
    <property type="match status" value="1"/>
</dbReference>
<dbReference type="PANTHER" id="PTHR48207">
    <property type="entry name" value="SUCCINATE--HYDROXYMETHYLGLUTARATE COA-TRANSFERASE"/>
    <property type="match status" value="1"/>
</dbReference>
<dbReference type="PANTHER" id="PTHR48207:SF3">
    <property type="entry name" value="SUCCINATE--HYDROXYMETHYLGLUTARATE COA-TRANSFERASE"/>
    <property type="match status" value="1"/>
</dbReference>
<dbReference type="Pfam" id="PF02515">
    <property type="entry name" value="CoA_transf_3"/>
    <property type="match status" value="1"/>
</dbReference>
<dbReference type="SUPFAM" id="SSF89796">
    <property type="entry name" value="CoA-transferase family III (CaiB/BaiF)"/>
    <property type="match status" value="1"/>
</dbReference>
<keyword id="KW-0002">3D-structure</keyword>
<keyword id="KW-1185">Reference proteome</keyword>
<keyword id="KW-0808">Transferase</keyword>
<organism>
    <name type="scientific">Escherichia coli (strain K12)</name>
    <dbReference type="NCBI Taxonomy" id="83333"/>
    <lineage>
        <taxon>Bacteria</taxon>
        <taxon>Pseudomonadati</taxon>
        <taxon>Pseudomonadota</taxon>
        <taxon>Gammaproteobacteria</taxon>
        <taxon>Enterobacterales</taxon>
        <taxon>Enterobacteriaceae</taxon>
        <taxon>Escherichia</taxon>
    </lineage>
</organism>
<proteinExistence type="evidence at protein level"/>
<protein>
    <recommendedName>
        <fullName>Formyl-CoA:oxalate CoA-transferase</fullName>
        <shortName>FCOCT</shortName>
        <ecNumber evidence="1 5">2.8.3.16</ecNumber>
    </recommendedName>
    <alternativeName>
        <fullName evidence="1">Formyl-coenzyme A transferase</fullName>
        <shortName evidence="1">Formyl-CoA transferase</shortName>
    </alternativeName>
</protein>